<accession>Q66K14</accession>
<accession>D3DWQ5</accession>
<accession>D3DWQ6</accession>
<accession>O75163</accession>
<accession>Q53EY0</accession>
<accession>Q6MZI2</accession>
<accession>Q96H49</accession>
<gene>
    <name type="primary">TBC1D9B</name>
    <name type="synonym">KIAA0676</name>
</gene>
<feature type="chain" id="PRO_0000288501" description="TBC1 domain family member 9B">
    <location>
        <begin position="1"/>
        <end position="1250"/>
    </location>
</feature>
<feature type="transmembrane region" description="Helical" evidence="2">
    <location>
        <begin position="668"/>
        <end position="688"/>
    </location>
</feature>
<feature type="domain" description="GRAM 1">
    <location>
        <begin position="142"/>
        <end position="209"/>
    </location>
</feature>
<feature type="domain" description="GRAM 2">
    <location>
        <begin position="288"/>
        <end position="356"/>
    </location>
</feature>
<feature type="domain" description="Rab-GAP TBC" evidence="3">
    <location>
        <begin position="508"/>
        <end position="695"/>
    </location>
</feature>
<feature type="domain" description="EF-hand" evidence="4">
    <location>
        <begin position="879"/>
        <end position="914"/>
    </location>
</feature>
<feature type="region of interest" description="Disordered" evidence="5">
    <location>
        <begin position="397"/>
        <end position="443"/>
    </location>
</feature>
<feature type="region of interest" description="Disordered" evidence="5">
    <location>
        <begin position="974"/>
        <end position="999"/>
    </location>
</feature>
<feature type="region of interest" description="Disordered" evidence="5">
    <location>
        <begin position="1069"/>
        <end position="1093"/>
    </location>
</feature>
<feature type="region of interest" description="Disordered" evidence="5">
    <location>
        <begin position="1128"/>
        <end position="1157"/>
    </location>
</feature>
<feature type="compositionally biased region" description="Polar residues" evidence="5">
    <location>
        <begin position="414"/>
        <end position="443"/>
    </location>
</feature>
<feature type="compositionally biased region" description="Basic and acidic residues" evidence="5">
    <location>
        <begin position="984"/>
        <end position="999"/>
    </location>
</feature>
<feature type="site" description="Arginine finger" evidence="1">
    <location>
        <position position="555"/>
    </location>
</feature>
<feature type="site" description="Glutamine finger" evidence="1">
    <location>
        <position position="594"/>
    </location>
</feature>
<feature type="modified residue" description="Phosphothreonine" evidence="19">
    <location>
        <position position="397"/>
    </location>
</feature>
<feature type="modified residue" description="Phosphoserine" evidence="14 17 20">
    <location>
        <position position="411"/>
    </location>
</feature>
<feature type="modified residue" description="Phosphoserine" evidence="14 15 17 18">
    <location>
        <position position="432"/>
    </location>
</feature>
<feature type="modified residue" description="Phosphoserine" evidence="14 15 16 17 19">
    <location>
        <position position="435"/>
    </location>
</feature>
<feature type="modified residue" description="Phosphoserine" evidence="18 19">
    <location>
        <position position="463"/>
    </location>
</feature>
<feature type="modified residue" description="Phosphoserine" evidence="20">
    <location>
        <position position="1241"/>
    </location>
</feature>
<feature type="splice variant" id="VSP_025699" description="In isoform 2." evidence="11 12">
    <location>
        <begin position="955"/>
        <end position="971"/>
    </location>
</feature>
<feature type="sequence variant" id="VAR_032440" description="In dbSNP:rs1057078.">
    <original>L</original>
    <variation>P</variation>
    <location>
        <position position="240"/>
    </location>
</feature>
<feature type="sequence variant" id="VAR_032441" description="In dbSNP:rs10037618.">
    <original>V</original>
    <variation>I</variation>
    <location>
        <position position="706"/>
    </location>
</feature>
<feature type="sequence variant" id="VAR_036196" description="In a breast cancer sample; somatic mutation." evidence="7">
    <original>P</original>
    <variation>Q</variation>
    <location>
        <position position="1086"/>
    </location>
</feature>
<feature type="sequence variant" id="VAR_032442" description="In dbSNP:rs30386." evidence="6 8 9 10">
    <original>K</original>
    <variation>T</variation>
    <location>
        <position position="1119"/>
    </location>
</feature>
<feature type="sequence conflict" description="In Ref. 5; BAD97229." evidence="13" ref="5">
    <original>E</original>
    <variation>G</variation>
    <location>
        <position position="893"/>
    </location>
</feature>
<feature type="sequence conflict" description="In Ref. 6; CAE46050." evidence="13" ref="6">
    <original>K</original>
    <variation>R</variation>
    <location>
        <position position="1231"/>
    </location>
</feature>
<sequence>MWLSPEEVLVANALWVTERANPFFVLQRRRGHGRGGGLTGLLVGTLDVVLDSSARVAPYRILHQTQDSQVYWTVACGSSRKEITKHWEWLENNLLQTLSIFDSEEDITTFVKGKIHGIIAEENKNLQPQGDEDPGKFKEAELKMRKQFGMPEGEKLVNYYSCSYWKGRVPRQGWLYLTVNHLCFYSFLLGKEVSLVVQWVDITRLEKNATLLFPESIRVDTRDQELFFSMFLNIGETFKLMEQLANLAMRQLLDSEGFLEDKALPRPIRPHRNISALKRDLDARAKNECYRATFRLPRDERLDGHTSCTLWTPFNKLHIPGQMFISNNYICFASKEEDACHLIIPLREVTIVEKADSSSVLPSPLSISTKSKMTFLFANLKDRDFLVQRISDFLQKTPSKQPGSIGSRKASVVDPSTESSPAPQEGSEQPASPASPLSSRQSFCAQEAPTASQGLLKLFQKNSPMEDLGAKGAKEKMKEESWHIHFFEYGRGVCMYRTAKTRALVLKGIPESLRGELWLLFSGAWNEMVTHPGYYAELVEKSTGKYSLATEEIERDLHRSMPEHPAFQNELGIAALRRVLTAYAFRNPTIGYCQAMNIVTSVLLLYGSEEEAFWLLVALCERMLPDYYNTRVVGALVDQGIFEELTRDFLPQLSEKMQDLGVISSISLSWFLTLFLSVMPFESAVVIVDCFFYEGIKVILQVALAVLDANMEQLLGCSDEGEAMTMLGRYLDNVVNKQSVSPPIPHLRALLSSSDDPPAEVDIFELLKVSYEKFSSLRAEDIEQMRFKQRLKVIQSLEDTAKRSVVRAIPVDIGFSIEELEDLYMVFKAKHLASQYWGCSRTMAGRRDPSLPYLEQYRIDASQFRELFASLTPWACGSHTPLLAGRMFRLLDENKDSLINFKEFVTGMSGMYHGDLTEKLKVLYKLHLPPALSPEEAESALEAAHYFTEDSSSEASPLASDLDLFLPWEAQEALPQEEQEGSGSEERGEEKGTSSPDYRHYLRMWAKEKEAQKETIKDLPKMNQEQFIELCKTLYNMFSEDPMEQDLYHAIATVASLLLRIGEVGKKFSARTGRKPRDCATEEDEPPAPELHQDAARELQPPAAGDPQAKAGGDTHLGKAPQESQVVVEGGSGEGQGSPSQLLSDDETKDDMSMSSYSVVSTGSLQCEDLADDTVLVGGEACSPTARIGGTVDTDWCISFEQILASILTESVLVNFFEKRVDIGLKIKDQKKVERQFSTASDHEQPGVSG</sequence>
<protein>
    <recommendedName>
        <fullName>TBC1 domain family member 9B</fullName>
    </recommendedName>
</protein>
<organism>
    <name type="scientific">Homo sapiens</name>
    <name type="common">Human</name>
    <dbReference type="NCBI Taxonomy" id="9606"/>
    <lineage>
        <taxon>Eukaryota</taxon>
        <taxon>Metazoa</taxon>
        <taxon>Chordata</taxon>
        <taxon>Craniata</taxon>
        <taxon>Vertebrata</taxon>
        <taxon>Euteleostomi</taxon>
        <taxon>Mammalia</taxon>
        <taxon>Eutheria</taxon>
        <taxon>Euarchontoglires</taxon>
        <taxon>Primates</taxon>
        <taxon>Haplorrhini</taxon>
        <taxon>Catarrhini</taxon>
        <taxon>Hominidae</taxon>
        <taxon>Homo</taxon>
    </lineage>
</organism>
<keyword id="KW-0025">Alternative splicing</keyword>
<keyword id="KW-0343">GTPase activation</keyword>
<keyword id="KW-0472">Membrane</keyword>
<keyword id="KW-0597">Phosphoprotein</keyword>
<keyword id="KW-1267">Proteomics identification</keyword>
<keyword id="KW-1185">Reference proteome</keyword>
<keyword id="KW-0677">Repeat</keyword>
<keyword id="KW-0812">Transmembrane</keyword>
<keyword id="KW-1133">Transmembrane helix</keyword>
<proteinExistence type="evidence at protein level"/>
<reference key="1">
    <citation type="journal article" date="1998" name="DNA Res.">
        <title>Prediction of the coding sequences of unidentified human genes. X. The complete sequences of 100 new cDNA clones from brain which can code for large proteins in vitro.</title>
        <authorList>
            <person name="Ishikawa K."/>
            <person name="Nagase T."/>
            <person name="Suyama M."/>
            <person name="Miyajima N."/>
            <person name="Tanaka A."/>
            <person name="Kotani H."/>
            <person name="Nomura N."/>
            <person name="Ohara O."/>
        </authorList>
    </citation>
    <scope>NUCLEOTIDE SEQUENCE [LARGE SCALE MRNA]</scope>
    <scope>VARIANT THR-1119</scope>
    <source>
        <tissue>Brain</tissue>
    </source>
</reference>
<reference key="2">
    <citation type="journal article" date="2004" name="Nature">
        <title>The DNA sequence and comparative analysis of human chromosome 5.</title>
        <authorList>
            <person name="Schmutz J."/>
            <person name="Martin J."/>
            <person name="Terry A."/>
            <person name="Couronne O."/>
            <person name="Grimwood J."/>
            <person name="Lowry S."/>
            <person name="Gordon L.A."/>
            <person name="Scott D."/>
            <person name="Xie G."/>
            <person name="Huang W."/>
            <person name="Hellsten U."/>
            <person name="Tran-Gyamfi M."/>
            <person name="She X."/>
            <person name="Prabhakar S."/>
            <person name="Aerts A."/>
            <person name="Altherr M."/>
            <person name="Bajorek E."/>
            <person name="Black S."/>
            <person name="Branscomb E."/>
            <person name="Caoile C."/>
            <person name="Challacombe J.F."/>
            <person name="Chan Y.M."/>
            <person name="Denys M."/>
            <person name="Detter J.C."/>
            <person name="Escobar J."/>
            <person name="Flowers D."/>
            <person name="Fotopulos D."/>
            <person name="Glavina T."/>
            <person name="Gomez M."/>
            <person name="Gonzales E."/>
            <person name="Goodstein D."/>
            <person name="Grigoriev I."/>
            <person name="Groza M."/>
            <person name="Hammon N."/>
            <person name="Hawkins T."/>
            <person name="Haydu L."/>
            <person name="Israni S."/>
            <person name="Jett J."/>
            <person name="Kadner K."/>
            <person name="Kimball H."/>
            <person name="Kobayashi A."/>
            <person name="Lopez F."/>
            <person name="Lou Y."/>
            <person name="Martinez D."/>
            <person name="Medina C."/>
            <person name="Morgan J."/>
            <person name="Nandkeshwar R."/>
            <person name="Noonan J.P."/>
            <person name="Pitluck S."/>
            <person name="Pollard M."/>
            <person name="Predki P."/>
            <person name="Priest J."/>
            <person name="Ramirez L."/>
            <person name="Retterer J."/>
            <person name="Rodriguez A."/>
            <person name="Rogers S."/>
            <person name="Salamov A."/>
            <person name="Salazar A."/>
            <person name="Thayer N."/>
            <person name="Tice H."/>
            <person name="Tsai M."/>
            <person name="Ustaszewska A."/>
            <person name="Vo N."/>
            <person name="Wheeler J."/>
            <person name="Wu K."/>
            <person name="Yang J."/>
            <person name="Dickson M."/>
            <person name="Cheng J.-F."/>
            <person name="Eichler E.E."/>
            <person name="Olsen A."/>
            <person name="Pennacchio L.A."/>
            <person name="Rokhsar D.S."/>
            <person name="Richardson P."/>
            <person name="Lucas S.M."/>
            <person name="Myers R.M."/>
            <person name="Rubin E.M."/>
        </authorList>
    </citation>
    <scope>NUCLEOTIDE SEQUENCE [LARGE SCALE GENOMIC DNA]</scope>
</reference>
<reference key="3">
    <citation type="submission" date="2005-09" db="EMBL/GenBank/DDBJ databases">
        <authorList>
            <person name="Mural R.J."/>
            <person name="Istrail S."/>
            <person name="Sutton G.G."/>
            <person name="Florea L."/>
            <person name="Halpern A.L."/>
            <person name="Mobarry C.M."/>
            <person name="Lippert R."/>
            <person name="Walenz B."/>
            <person name="Shatkay H."/>
            <person name="Dew I."/>
            <person name="Miller J.R."/>
            <person name="Flanigan M.J."/>
            <person name="Edwards N.J."/>
            <person name="Bolanos R."/>
            <person name="Fasulo D."/>
            <person name="Halldorsson B.V."/>
            <person name="Hannenhalli S."/>
            <person name="Turner R."/>
            <person name="Yooseph S."/>
            <person name="Lu F."/>
            <person name="Nusskern D.R."/>
            <person name="Shue B.C."/>
            <person name="Zheng X.H."/>
            <person name="Zhong F."/>
            <person name="Delcher A.L."/>
            <person name="Huson D.H."/>
            <person name="Kravitz S.A."/>
            <person name="Mouchard L."/>
            <person name="Reinert K."/>
            <person name="Remington K.A."/>
            <person name="Clark A.G."/>
            <person name="Waterman M.S."/>
            <person name="Eichler E.E."/>
            <person name="Adams M.D."/>
            <person name="Hunkapiller M.W."/>
            <person name="Myers E.W."/>
            <person name="Venter J.C."/>
        </authorList>
    </citation>
    <scope>NUCLEOTIDE SEQUENCE [LARGE SCALE GENOMIC DNA]</scope>
</reference>
<reference key="4">
    <citation type="journal article" date="2004" name="Genome Res.">
        <title>The status, quality, and expansion of the NIH full-length cDNA project: the Mammalian Gene Collection (MGC).</title>
        <authorList>
            <consortium name="The MGC Project Team"/>
        </authorList>
    </citation>
    <scope>NUCLEOTIDE SEQUENCE [LARGE SCALE MRNA] OF 635-1250 (ISOFORM 2)</scope>
    <scope>VARIANT THR-1119</scope>
    <source>
        <tissue>Brain</tissue>
        <tissue>Skin</tissue>
    </source>
</reference>
<reference key="5">
    <citation type="submission" date="2005-04" db="EMBL/GenBank/DDBJ databases">
        <authorList>
            <person name="Totoki Y."/>
            <person name="Toyoda A."/>
            <person name="Takeda T."/>
            <person name="Sakaki Y."/>
            <person name="Tanaka A."/>
            <person name="Yokoyama S."/>
        </authorList>
    </citation>
    <scope>NUCLEOTIDE SEQUENCE [LARGE SCALE MRNA] OF 805-1250 (ISOFORM 2)</scope>
    <scope>VARIANT THR-1119</scope>
    <source>
        <tissue>Colon</tissue>
    </source>
</reference>
<reference key="6">
    <citation type="journal article" date="2007" name="BMC Genomics">
        <title>The full-ORF clone resource of the German cDNA consortium.</title>
        <authorList>
            <person name="Bechtel S."/>
            <person name="Rosenfelder H."/>
            <person name="Duda A."/>
            <person name="Schmidt C.P."/>
            <person name="Ernst U."/>
            <person name="Wellenreuther R."/>
            <person name="Mehrle A."/>
            <person name="Schuster C."/>
            <person name="Bahr A."/>
            <person name="Bloecker H."/>
            <person name="Heubner D."/>
            <person name="Hoerlein A."/>
            <person name="Michel G."/>
            <person name="Wedler H."/>
            <person name="Koehrer K."/>
            <person name="Ottenwaelder B."/>
            <person name="Poustka A."/>
            <person name="Wiemann S."/>
            <person name="Schupp I."/>
        </authorList>
    </citation>
    <scope>NUCLEOTIDE SEQUENCE [LARGE SCALE MRNA] OF 1004-1250</scope>
    <scope>VARIANT THR-1119</scope>
    <source>
        <tissue>Uterus</tissue>
    </source>
</reference>
<reference key="7">
    <citation type="journal article" date="2008" name="Mol. Cell">
        <title>Kinase-selective enrichment enables quantitative phosphoproteomics of the kinome across the cell cycle.</title>
        <authorList>
            <person name="Daub H."/>
            <person name="Olsen J.V."/>
            <person name="Bairlein M."/>
            <person name="Gnad F."/>
            <person name="Oppermann F.S."/>
            <person name="Korner R."/>
            <person name="Greff Z."/>
            <person name="Keri G."/>
            <person name="Stemmann O."/>
            <person name="Mann M."/>
        </authorList>
    </citation>
    <scope>PHOSPHORYLATION [LARGE SCALE ANALYSIS] AT SER-432 AND SER-435</scope>
    <scope>IDENTIFICATION BY MASS SPECTROMETRY [LARGE SCALE ANALYSIS]</scope>
    <source>
        <tissue>Cervix carcinoma</tissue>
    </source>
</reference>
<reference key="8">
    <citation type="journal article" date="2008" name="Proc. Natl. Acad. Sci. U.S.A.">
        <title>A quantitative atlas of mitotic phosphorylation.</title>
        <authorList>
            <person name="Dephoure N."/>
            <person name="Zhou C."/>
            <person name="Villen J."/>
            <person name="Beausoleil S.A."/>
            <person name="Bakalarski C.E."/>
            <person name="Elledge S.J."/>
            <person name="Gygi S.P."/>
        </authorList>
    </citation>
    <scope>PHOSPHORYLATION [LARGE SCALE ANALYSIS] AT SER-411; SER-432 AND SER-435</scope>
    <scope>IDENTIFICATION BY MASS SPECTROMETRY [LARGE SCALE ANALYSIS]</scope>
    <source>
        <tissue>Cervix carcinoma</tissue>
    </source>
</reference>
<reference key="9">
    <citation type="journal article" date="2009" name="Anal. Chem.">
        <title>Lys-N and trypsin cover complementary parts of the phosphoproteome in a refined SCX-based approach.</title>
        <authorList>
            <person name="Gauci S."/>
            <person name="Helbig A.O."/>
            <person name="Slijper M."/>
            <person name="Krijgsveld J."/>
            <person name="Heck A.J."/>
            <person name="Mohammed S."/>
        </authorList>
    </citation>
    <scope>IDENTIFICATION BY MASS SPECTROMETRY [LARGE SCALE ANALYSIS]</scope>
</reference>
<reference key="10">
    <citation type="journal article" date="2009" name="Mol. Cell. Proteomics">
        <title>Large-scale proteomics analysis of the human kinome.</title>
        <authorList>
            <person name="Oppermann F.S."/>
            <person name="Gnad F."/>
            <person name="Olsen J.V."/>
            <person name="Hornberger R."/>
            <person name="Greff Z."/>
            <person name="Keri G."/>
            <person name="Mann M."/>
            <person name="Daub H."/>
        </authorList>
    </citation>
    <scope>PHOSPHORYLATION [LARGE SCALE ANALYSIS] AT SER-435</scope>
    <scope>IDENTIFICATION BY MASS SPECTROMETRY [LARGE SCALE ANALYSIS]</scope>
</reference>
<reference key="11">
    <citation type="journal article" date="2009" name="Sci. Signal.">
        <title>Quantitative phosphoproteomic analysis of T cell receptor signaling reveals system-wide modulation of protein-protein interactions.</title>
        <authorList>
            <person name="Mayya V."/>
            <person name="Lundgren D.H."/>
            <person name="Hwang S.-I."/>
            <person name="Rezaul K."/>
            <person name="Wu L."/>
            <person name="Eng J.K."/>
            <person name="Rodionov V."/>
            <person name="Han D.K."/>
        </authorList>
    </citation>
    <scope>PHOSPHORYLATION [LARGE SCALE ANALYSIS] AT SER-411; SER-432 AND SER-435</scope>
    <scope>IDENTIFICATION BY MASS SPECTROMETRY [LARGE SCALE ANALYSIS]</scope>
    <source>
        <tissue>Leukemic T-cell</tissue>
    </source>
</reference>
<reference key="12">
    <citation type="journal article" date="2010" name="Sci. Signal.">
        <title>Quantitative phosphoproteomics reveals widespread full phosphorylation site occupancy during mitosis.</title>
        <authorList>
            <person name="Olsen J.V."/>
            <person name="Vermeulen M."/>
            <person name="Santamaria A."/>
            <person name="Kumar C."/>
            <person name="Miller M.L."/>
            <person name="Jensen L.J."/>
            <person name="Gnad F."/>
            <person name="Cox J."/>
            <person name="Jensen T.S."/>
            <person name="Nigg E.A."/>
            <person name="Brunak S."/>
            <person name="Mann M."/>
        </authorList>
    </citation>
    <scope>PHOSPHORYLATION [LARGE SCALE ANALYSIS] AT SER-432 AND SER-463</scope>
    <scope>IDENTIFICATION BY MASS SPECTROMETRY [LARGE SCALE ANALYSIS]</scope>
    <source>
        <tissue>Cervix carcinoma</tissue>
    </source>
</reference>
<reference key="13">
    <citation type="journal article" date="2011" name="BMC Syst. Biol.">
        <title>Initial characterization of the human central proteome.</title>
        <authorList>
            <person name="Burkard T.R."/>
            <person name="Planyavsky M."/>
            <person name="Kaupe I."/>
            <person name="Breitwieser F.P."/>
            <person name="Buerckstuemmer T."/>
            <person name="Bennett K.L."/>
            <person name="Superti-Furga G."/>
            <person name="Colinge J."/>
        </authorList>
    </citation>
    <scope>IDENTIFICATION BY MASS SPECTROMETRY [LARGE SCALE ANALYSIS]</scope>
</reference>
<reference key="14">
    <citation type="journal article" date="2013" name="J. Proteome Res.">
        <title>Toward a comprehensive characterization of a human cancer cell phosphoproteome.</title>
        <authorList>
            <person name="Zhou H."/>
            <person name="Di Palma S."/>
            <person name="Preisinger C."/>
            <person name="Peng M."/>
            <person name="Polat A.N."/>
            <person name="Heck A.J."/>
            <person name="Mohammed S."/>
        </authorList>
    </citation>
    <scope>PHOSPHORYLATION [LARGE SCALE ANALYSIS] AT THR-397; SER-435 AND SER-463</scope>
    <scope>IDENTIFICATION BY MASS SPECTROMETRY [LARGE SCALE ANALYSIS]</scope>
    <source>
        <tissue>Cervix carcinoma</tissue>
        <tissue>Erythroleukemia</tissue>
    </source>
</reference>
<reference key="15">
    <citation type="journal article" date="2014" name="J. Proteomics">
        <title>An enzyme assisted RP-RPLC approach for in-depth analysis of human liver phosphoproteome.</title>
        <authorList>
            <person name="Bian Y."/>
            <person name="Song C."/>
            <person name="Cheng K."/>
            <person name="Dong M."/>
            <person name="Wang F."/>
            <person name="Huang J."/>
            <person name="Sun D."/>
            <person name="Wang L."/>
            <person name="Ye M."/>
            <person name="Zou H."/>
        </authorList>
    </citation>
    <scope>PHOSPHORYLATION [LARGE SCALE ANALYSIS] AT SER-411 AND SER-1241</scope>
    <scope>IDENTIFICATION BY MASS SPECTROMETRY [LARGE SCALE ANALYSIS]</scope>
    <source>
        <tissue>Liver</tissue>
    </source>
</reference>
<reference key="16">
    <citation type="journal article" date="2006" name="Science">
        <title>The consensus coding sequences of human breast and colorectal cancers.</title>
        <authorList>
            <person name="Sjoeblom T."/>
            <person name="Jones S."/>
            <person name="Wood L.D."/>
            <person name="Parsons D.W."/>
            <person name="Lin J."/>
            <person name="Barber T.D."/>
            <person name="Mandelker D."/>
            <person name="Leary R.J."/>
            <person name="Ptak J."/>
            <person name="Silliman N."/>
            <person name="Szabo S."/>
            <person name="Buckhaults P."/>
            <person name="Farrell C."/>
            <person name="Meeh P."/>
            <person name="Markowitz S.D."/>
            <person name="Willis J."/>
            <person name="Dawson D."/>
            <person name="Willson J.K.V."/>
            <person name="Gazdar A.F."/>
            <person name="Hartigan J."/>
            <person name="Wu L."/>
            <person name="Liu C."/>
            <person name="Parmigiani G."/>
            <person name="Park B.H."/>
            <person name="Bachman K.E."/>
            <person name="Papadopoulos N."/>
            <person name="Vogelstein B."/>
            <person name="Kinzler K.W."/>
            <person name="Velculescu V.E."/>
        </authorList>
    </citation>
    <scope>VARIANT [LARGE SCALE ANALYSIS] GLN-1086</scope>
</reference>
<evidence type="ECO:0000250" key="1"/>
<evidence type="ECO:0000255" key="2"/>
<evidence type="ECO:0000255" key="3">
    <source>
        <dbReference type="PROSITE-ProRule" id="PRU00163"/>
    </source>
</evidence>
<evidence type="ECO:0000255" key="4">
    <source>
        <dbReference type="PROSITE-ProRule" id="PRU00448"/>
    </source>
</evidence>
<evidence type="ECO:0000256" key="5">
    <source>
        <dbReference type="SAM" id="MobiDB-lite"/>
    </source>
</evidence>
<evidence type="ECO:0000269" key="6">
    <source>
    </source>
</evidence>
<evidence type="ECO:0000269" key="7">
    <source>
    </source>
</evidence>
<evidence type="ECO:0000269" key="8">
    <source>
    </source>
</evidence>
<evidence type="ECO:0000269" key="9">
    <source>
    </source>
</evidence>
<evidence type="ECO:0000269" key="10">
    <source ref="5"/>
</evidence>
<evidence type="ECO:0000303" key="11">
    <source>
    </source>
</evidence>
<evidence type="ECO:0000303" key="12">
    <source ref="5"/>
</evidence>
<evidence type="ECO:0000305" key="13"/>
<evidence type="ECO:0007744" key="14">
    <source>
    </source>
</evidence>
<evidence type="ECO:0007744" key="15">
    <source>
    </source>
</evidence>
<evidence type="ECO:0007744" key="16">
    <source>
    </source>
</evidence>
<evidence type="ECO:0007744" key="17">
    <source>
    </source>
</evidence>
<evidence type="ECO:0007744" key="18">
    <source>
    </source>
</evidence>
<evidence type="ECO:0007744" key="19">
    <source>
    </source>
</evidence>
<evidence type="ECO:0007744" key="20">
    <source>
    </source>
</evidence>
<name>TBC9B_HUMAN</name>
<comment type="function">
    <text>May act as a GTPase-activating protein for Rab family protein(s).</text>
</comment>
<comment type="interaction">
    <interactant intactId="EBI-10217736">
        <id>Q66K14-2</id>
    </interactant>
    <interactant intactId="EBI-720116">
        <id>P60520</id>
        <label>GABARAPL2</label>
    </interactant>
    <organismsDiffer>false</organismsDiffer>
    <experiments>3</experiments>
</comment>
<comment type="interaction">
    <interactant intactId="EBI-10217736">
        <id>Q66K14-2</id>
    </interactant>
    <interactant intactId="EBI-739909">
        <id>Q969R5</id>
        <label>L3MBTL2</label>
    </interactant>
    <organismsDiffer>false</organismsDiffer>
    <experiments>3</experiments>
</comment>
<comment type="subcellular location">
    <subcellularLocation>
        <location evidence="13">Membrane</location>
        <topology evidence="13">Single-pass membrane protein</topology>
    </subcellularLocation>
</comment>
<comment type="alternative products">
    <event type="alternative splicing"/>
    <isoform>
        <id>Q66K14-1</id>
        <name>1</name>
        <sequence type="displayed"/>
    </isoform>
    <isoform>
        <id>Q66K14-2</id>
        <name>2</name>
        <sequence type="described" ref="VSP_025699"/>
    </isoform>
</comment>
<comment type="domain">
    <text evidence="1">The arginine and glutamine fingers are critical for the GTPase-activating mechanism, they pull out Rab's 'switch 2' glutamine and insert in Rab's active site.</text>
</comment>
<comment type="sequence caution" evidence="13">
    <conflict type="erroneous initiation">
        <sequence resource="EMBL-CDS" id="AAH08919"/>
    </conflict>
    <text>Extended N-terminus.</text>
</comment>
<dbReference type="EMBL" id="AB014576">
    <property type="protein sequence ID" value="BAA31651.1"/>
    <property type="molecule type" value="mRNA"/>
</dbReference>
<dbReference type="EMBL" id="AC008393">
    <property type="status" value="NOT_ANNOTATED_CDS"/>
    <property type="molecule type" value="Genomic_DNA"/>
</dbReference>
<dbReference type="EMBL" id="AC010285">
    <property type="status" value="NOT_ANNOTATED_CDS"/>
    <property type="molecule type" value="Genomic_DNA"/>
</dbReference>
<dbReference type="EMBL" id="CH471165">
    <property type="protein sequence ID" value="EAW53780.1"/>
    <property type="molecule type" value="Genomic_DNA"/>
</dbReference>
<dbReference type="EMBL" id="CH471165">
    <property type="protein sequence ID" value="EAW53782.1"/>
    <property type="molecule type" value="Genomic_DNA"/>
</dbReference>
<dbReference type="EMBL" id="CH471165">
    <property type="protein sequence ID" value="EAW53777.1"/>
    <property type="molecule type" value="Genomic_DNA"/>
</dbReference>
<dbReference type="EMBL" id="CH471165">
    <property type="protein sequence ID" value="EAW53779.1"/>
    <property type="molecule type" value="Genomic_DNA"/>
</dbReference>
<dbReference type="EMBL" id="BC008919">
    <property type="protein sequence ID" value="AAH08919.3"/>
    <property type="status" value="ALT_INIT"/>
    <property type="molecule type" value="mRNA"/>
</dbReference>
<dbReference type="EMBL" id="BC080659">
    <property type="protein sequence ID" value="AAH80659.1"/>
    <property type="molecule type" value="mRNA"/>
</dbReference>
<dbReference type="EMBL" id="AK223509">
    <property type="protein sequence ID" value="BAD97229.1"/>
    <property type="molecule type" value="mRNA"/>
</dbReference>
<dbReference type="EMBL" id="BX641107">
    <property type="protein sequence ID" value="CAE46050.1"/>
    <property type="molecule type" value="mRNA"/>
</dbReference>
<dbReference type="CCDS" id="CCDS43408.1">
    <molecule id="Q66K14-1"/>
</dbReference>
<dbReference type="CCDS" id="CCDS4450.1">
    <molecule id="Q66K14-2"/>
</dbReference>
<dbReference type="RefSeq" id="NP_055858.2">
    <molecule id="Q66K14-2"/>
    <property type="nucleotide sequence ID" value="NM_015043.3"/>
</dbReference>
<dbReference type="RefSeq" id="NP_942568.2">
    <molecule id="Q66K14-1"/>
    <property type="nucleotide sequence ID" value="NM_198868.2"/>
</dbReference>
<dbReference type="SMR" id="Q66K14"/>
<dbReference type="BioGRID" id="116696">
    <property type="interactions" value="106"/>
</dbReference>
<dbReference type="FunCoup" id="Q66K14">
    <property type="interactions" value="2283"/>
</dbReference>
<dbReference type="IntAct" id="Q66K14">
    <property type="interactions" value="69"/>
</dbReference>
<dbReference type="MINT" id="Q66K14"/>
<dbReference type="STRING" id="9606.ENSP00000349291"/>
<dbReference type="GlyGen" id="Q66K14">
    <property type="glycosylation" value="3 sites, 1 N-linked glycan (1 site), 1 O-linked glycan (2 sites)"/>
</dbReference>
<dbReference type="iPTMnet" id="Q66K14"/>
<dbReference type="PhosphoSitePlus" id="Q66K14"/>
<dbReference type="BioMuta" id="TBC1D9B"/>
<dbReference type="DMDM" id="296452939"/>
<dbReference type="jPOST" id="Q66K14"/>
<dbReference type="MassIVE" id="Q66K14"/>
<dbReference type="PaxDb" id="9606-ENSP00000349291"/>
<dbReference type="PeptideAtlas" id="Q66K14"/>
<dbReference type="ProteomicsDB" id="65950">
    <molecule id="Q66K14-1"/>
</dbReference>
<dbReference type="ProteomicsDB" id="65951">
    <molecule id="Q66K14-2"/>
</dbReference>
<dbReference type="Pumba" id="Q66K14"/>
<dbReference type="Antibodypedia" id="50209">
    <property type="antibodies" value="55 antibodies from 13 providers"/>
</dbReference>
<dbReference type="DNASU" id="23061"/>
<dbReference type="Ensembl" id="ENST00000355235.8">
    <molecule id="Q66K14-2"/>
    <property type="protein sequence ID" value="ENSP00000347375.3"/>
    <property type="gene ID" value="ENSG00000197226.13"/>
</dbReference>
<dbReference type="Ensembl" id="ENST00000356834.7">
    <molecule id="Q66K14-1"/>
    <property type="protein sequence ID" value="ENSP00000349291.3"/>
    <property type="gene ID" value="ENSG00000197226.13"/>
</dbReference>
<dbReference type="Ensembl" id="ENST00000639361.2">
    <property type="protein sequence ID" value="ENSP00000491970.2"/>
    <property type="gene ID" value="ENSG00000284400.2"/>
</dbReference>
<dbReference type="Ensembl" id="ENST00000639711.2">
    <property type="protein sequence ID" value="ENSP00000491373.2"/>
    <property type="gene ID" value="ENSG00000284400.2"/>
</dbReference>
<dbReference type="GeneID" id="23061"/>
<dbReference type="KEGG" id="hsa:23061"/>
<dbReference type="MANE-Select" id="ENST00000355235.8">
    <molecule id="Q66K14-2"/>
    <property type="protein sequence ID" value="ENSP00000347375.3"/>
    <property type="RefSeq nucleotide sequence ID" value="NM_015043.4"/>
    <property type="RefSeq protein sequence ID" value="NP_055858.2"/>
</dbReference>
<dbReference type="UCSC" id="uc003mlh.4">
    <molecule id="Q66K14-1"/>
    <property type="organism name" value="human"/>
</dbReference>
<dbReference type="AGR" id="HGNC:29097"/>
<dbReference type="CTD" id="23061"/>
<dbReference type="DisGeNET" id="23061"/>
<dbReference type="GeneCards" id="TBC1D9B"/>
<dbReference type="HGNC" id="HGNC:29097">
    <property type="gene designation" value="TBC1D9B"/>
</dbReference>
<dbReference type="HPA" id="ENSG00000197226">
    <property type="expression patterns" value="Low tissue specificity"/>
</dbReference>
<dbReference type="MIM" id="618039">
    <property type="type" value="gene"/>
</dbReference>
<dbReference type="neXtProt" id="NX_Q66K14"/>
<dbReference type="OpenTargets" id="ENSG00000197226"/>
<dbReference type="PharmGKB" id="PA145148062"/>
<dbReference type="VEuPathDB" id="HostDB:ENSG00000197226"/>
<dbReference type="eggNOG" id="KOG4347">
    <property type="taxonomic scope" value="Eukaryota"/>
</dbReference>
<dbReference type="GeneTree" id="ENSGT00940000158554"/>
<dbReference type="HOGENOM" id="CLU_003535_0_1_1"/>
<dbReference type="InParanoid" id="Q66K14"/>
<dbReference type="OMA" id="CTGEVPT"/>
<dbReference type="OrthoDB" id="17687at2759"/>
<dbReference type="PAN-GO" id="Q66K14">
    <property type="GO annotations" value="2 GO annotations based on evolutionary models"/>
</dbReference>
<dbReference type="PhylomeDB" id="Q66K14"/>
<dbReference type="TreeFam" id="TF313145"/>
<dbReference type="PathwayCommons" id="Q66K14"/>
<dbReference type="SignaLink" id="Q66K14"/>
<dbReference type="BioGRID-ORCS" id="23061">
    <property type="hits" value="9 hits in 1062 CRISPR screens"/>
</dbReference>
<dbReference type="ChiTaRS" id="TBC1D9B">
    <property type="organism name" value="human"/>
</dbReference>
<dbReference type="GenomeRNAi" id="23061"/>
<dbReference type="Pharos" id="Q66K14">
    <property type="development level" value="Tdark"/>
</dbReference>
<dbReference type="PRO" id="PR:Q66K14"/>
<dbReference type="Proteomes" id="UP000005640">
    <property type="component" value="Chromosome 5"/>
</dbReference>
<dbReference type="RNAct" id="Q66K14">
    <property type="molecule type" value="protein"/>
</dbReference>
<dbReference type="Bgee" id="ENSG00000197226">
    <property type="expression patterns" value="Expressed in right hemisphere of cerebellum and 115 other cell types or tissues"/>
</dbReference>
<dbReference type="ExpressionAtlas" id="Q66K14">
    <property type="expression patterns" value="baseline and differential"/>
</dbReference>
<dbReference type="GO" id="GO:0016020">
    <property type="term" value="C:membrane"/>
    <property type="evidence" value="ECO:0007669"/>
    <property type="project" value="UniProtKB-SubCell"/>
</dbReference>
<dbReference type="GO" id="GO:0005509">
    <property type="term" value="F:calcium ion binding"/>
    <property type="evidence" value="ECO:0007669"/>
    <property type="project" value="InterPro"/>
</dbReference>
<dbReference type="GO" id="GO:0005096">
    <property type="term" value="F:GTPase activator activity"/>
    <property type="evidence" value="ECO:0000318"/>
    <property type="project" value="GO_Central"/>
</dbReference>
<dbReference type="CDD" id="cd13351">
    <property type="entry name" value="PH-GRAM1_TCB1D9_TCB1D9B"/>
    <property type="match status" value="1"/>
</dbReference>
<dbReference type="CDD" id="cd13354">
    <property type="entry name" value="PH-GRAM2_TCB1D9_TCB1D9B"/>
    <property type="match status" value="1"/>
</dbReference>
<dbReference type="FunFam" id="2.30.29.30:FF:000013">
    <property type="entry name" value="Putative TBC1 domain family member 8B"/>
    <property type="match status" value="1"/>
</dbReference>
<dbReference type="FunFam" id="2.30.29.30:FF:000041">
    <property type="entry name" value="TBC1 domain family member 9 isoform X1"/>
    <property type="match status" value="1"/>
</dbReference>
<dbReference type="FunFam" id="1.10.8.270:FF:000002">
    <property type="entry name" value="TBC1 domain family member 9B"/>
    <property type="match status" value="1"/>
</dbReference>
<dbReference type="FunFam" id="1.10.238.10:FF:000130">
    <property type="entry name" value="TBC1 domain family member 9B isoform X1"/>
    <property type="match status" value="1"/>
</dbReference>
<dbReference type="FunFam" id="1.10.472.80:FF:000033">
    <property type="entry name" value="TBC1 domain family member 9B isoform X1"/>
    <property type="match status" value="1"/>
</dbReference>
<dbReference type="Gene3D" id="1.10.238.10">
    <property type="entry name" value="EF-hand"/>
    <property type="match status" value="1"/>
</dbReference>
<dbReference type="Gene3D" id="2.30.29.30">
    <property type="entry name" value="Pleckstrin-homology domain (PH domain)/Phosphotyrosine-binding domain (PTB)"/>
    <property type="match status" value="2"/>
</dbReference>
<dbReference type="Gene3D" id="1.10.8.270">
    <property type="entry name" value="putative rabgap domain of human tbc1 domain family member 14 like domains"/>
    <property type="match status" value="1"/>
</dbReference>
<dbReference type="Gene3D" id="1.10.10.750">
    <property type="entry name" value="Ypt/Rab-GAP domain of gyp1p, domain 1"/>
    <property type="match status" value="1"/>
</dbReference>
<dbReference type="Gene3D" id="1.10.472.80">
    <property type="entry name" value="Ypt/Rab-GAP domain of gyp1p, domain 3"/>
    <property type="match status" value="1"/>
</dbReference>
<dbReference type="InterPro" id="IPR011992">
    <property type="entry name" value="EF-hand-dom_pair"/>
</dbReference>
<dbReference type="InterPro" id="IPR002048">
    <property type="entry name" value="EF_hand_dom"/>
</dbReference>
<dbReference type="InterPro" id="IPR004182">
    <property type="entry name" value="GRAM"/>
</dbReference>
<dbReference type="InterPro" id="IPR011993">
    <property type="entry name" value="PH-like_dom_sf"/>
</dbReference>
<dbReference type="InterPro" id="IPR000195">
    <property type="entry name" value="Rab-GAP-TBC_dom"/>
</dbReference>
<dbReference type="InterPro" id="IPR035969">
    <property type="entry name" value="Rab-GAP_TBC_sf"/>
</dbReference>
<dbReference type="InterPro" id="IPR036014">
    <property type="entry name" value="TCB1D9/TCB1D9B_PH-GRAM1"/>
</dbReference>
<dbReference type="InterPro" id="IPR036017">
    <property type="entry name" value="TCB1D9/TCB1D9B_PH-GRAM2"/>
</dbReference>
<dbReference type="PANTHER" id="PTHR47666">
    <property type="entry name" value="PROTEIN VASCULAR ASSOCIATED DEATH 1, CHLOROPLASTIC"/>
    <property type="match status" value="1"/>
</dbReference>
<dbReference type="PANTHER" id="PTHR47666:SF5">
    <property type="entry name" value="TBC1 DOMAIN FAMILY MEMBER 9B"/>
    <property type="match status" value="1"/>
</dbReference>
<dbReference type="Pfam" id="PF02893">
    <property type="entry name" value="GRAM"/>
    <property type="match status" value="2"/>
</dbReference>
<dbReference type="Pfam" id="PF00566">
    <property type="entry name" value="RabGAP-TBC"/>
    <property type="match status" value="1"/>
</dbReference>
<dbReference type="SMART" id="SM00568">
    <property type="entry name" value="GRAM"/>
    <property type="match status" value="2"/>
</dbReference>
<dbReference type="SMART" id="SM00164">
    <property type="entry name" value="TBC"/>
    <property type="match status" value="1"/>
</dbReference>
<dbReference type="SUPFAM" id="SSF47473">
    <property type="entry name" value="EF-hand"/>
    <property type="match status" value="1"/>
</dbReference>
<dbReference type="SUPFAM" id="SSF47923">
    <property type="entry name" value="Ypt/Rab-GAP domain of gyp1p"/>
    <property type="match status" value="2"/>
</dbReference>
<dbReference type="PROSITE" id="PS50222">
    <property type="entry name" value="EF_HAND_2"/>
    <property type="match status" value="1"/>
</dbReference>
<dbReference type="PROSITE" id="PS50086">
    <property type="entry name" value="TBC_RABGAP"/>
    <property type="match status" value="1"/>
</dbReference>